<protein>
    <recommendedName>
        <fullName evidence="1">Bifunctional uridylyltransferase/uridylyl-removing enzyme</fullName>
        <shortName evidence="1">UTase/UR</shortName>
    </recommendedName>
    <alternativeName>
        <fullName evidence="1">Bifunctional [protein-PII] modification enzyme</fullName>
    </alternativeName>
    <alternativeName>
        <fullName evidence="1">Bifunctional nitrogen sensor protein</fullName>
    </alternativeName>
    <domain>
        <recommendedName>
            <fullName evidence="1">[Protein-PII] uridylyltransferase</fullName>
            <shortName evidence="1">PII uridylyltransferase</shortName>
            <shortName evidence="1">UTase</shortName>
            <ecNumber evidence="1">2.7.7.59</ecNumber>
        </recommendedName>
    </domain>
    <domain>
        <recommendedName>
            <fullName evidence="1">[Protein-PII]-UMP uridylyl-removing enzyme</fullName>
            <shortName evidence="1">UR</shortName>
            <ecNumber evidence="1">3.1.4.-</ecNumber>
        </recommendedName>
    </domain>
</protein>
<accession>Q0TLG6</accession>
<organism>
    <name type="scientific">Escherichia coli O6:K15:H31 (strain 536 / UPEC)</name>
    <dbReference type="NCBI Taxonomy" id="362663"/>
    <lineage>
        <taxon>Bacteria</taxon>
        <taxon>Pseudomonadati</taxon>
        <taxon>Pseudomonadota</taxon>
        <taxon>Gammaproteobacteria</taxon>
        <taxon>Enterobacterales</taxon>
        <taxon>Enterobacteriaceae</taxon>
        <taxon>Escherichia</taxon>
    </lineage>
</organism>
<proteinExistence type="inferred from homology"/>
<sequence length="890" mass="102408">MNTLPEQYANTALPTLHGQPQNPCAWPRDELTVGGIKAHIDTFQRWLGDAFDNGISAEQLIEARTEFIDQLLQRLWIEAGFSQIADLALVAVGGYGRGELHPLSDIDLLILSRKKLPDDQAQKVGELLTLLWDVKLEVGHSVRTLEECMLEGLSDLTVATNLIESRLLIGDVALFLELQKHIFSEGFWPSDKFYAAKVEEQNQRHQRYHGTSYNLEPDIKSSPGGLRDIHTLQWVARRHFGATSLDEMVGFGFLTSAERAELNECLHILWRIRFALHLVVSRYDNRLLFDRQLSVAQRLNYSGEGNEPVERMMKDYFRVTRRVSELNQMLLQLFDEAILALPADEKPRPIDDEFQLRGTLIDLRDETLFMRQPEAILRMFYTMVRNSAITGIYSTTLRQLRHARRHLQQPLCNIPEARKLFLSILRHPGAVRRGLLPMHRHSVLGAYMPQWSHIVGQMQFDLFHAYTVDEHTIRVMLKLESFASEETRQRHPLCVDVWPRLPSTELIFIAALFHDIAKGRGGDHSILGAQDVVHFAELHGLNSRETQLVAWLVRQHLLMSVTAQRRDIQDPEVIKQFAEEVQTENRLRYLVCLTVADICATNETLWNSWKQSLLRELYFATEKQLRRGMQNTPDMRERVRHHQLQALALLRMDNIDEEALHQIWSRCRANYFVRHSPNQLAWHARHLLQHDLSKPLVLLSPQATRGGTEIFIWSPDRPYLFAAVCAELDRRNLSVHDAQIFTTRDGMAMDTFIVLEPDGSPLSADRHEVIRFGLEQVLTQSSWQPPQPRRQPAKLRHFTVETEVTFLPTHTDRKSFLELIALDQPGLLARVGKIFADLGISLHGARITTIGERVEDLFIIATADRRALNNELQQEVHQRLTEALNPNDKG</sequence>
<name>GLND_ECOL5</name>
<evidence type="ECO:0000255" key="1">
    <source>
        <dbReference type="HAMAP-Rule" id="MF_00277"/>
    </source>
</evidence>
<evidence type="ECO:0000255" key="2">
    <source>
        <dbReference type="PROSITE-ProRule" id="PRU01175"/>
    </source>
</evidence>
<keyword id="KW-0378">Hydrolase</keyword>
<keyword id="KW-0460">Magnesium</keyword>
<keyword id="KW-0511">Multifunctional enzyme</keyword>
<keyword id="KW-0548">Nucleotidyltransferase</keyword>
<keyword id="KW-0677">Repeat</keyword>
<keyword id="KW-0808">Transferase</keyword>
<feature type="chain" id="PRO_1000022340" description="Bifunctional uridylyltransferase/uridylyl-removing enzyme">
    <location>
        <begin position="1"/>
        <end position="890"/>
    </location>
</feature>
<feature type="domain" description="HD" evidence="2">
    <location>
        <begin position="468"/>
        <end position="590"/>
    </location>
</feature>
<feature type="domain" description="ACT 1" evidence="1">
    <location>
        <begin position="709"/>
        <end position="789"/>
    </location>
</feature>
<feature type="domain" description="ACT 2" evidence="1">
    <location>
        <begin position="816"/>
        <end position="890"/>
    </location>
</feature>
<feature type="region of interest" description="Uridylyltransferase">
    <location>
        <begin position="1"/>
        <end position="349"/>
    </location>
</feature>
<feature type="region of interest" description="Uridylyl-removing">
    <location>
        <begin position="350"/>
        <end position="708"/>
    </location>
</feature>
<dbReference type="EC" id="2.7.7.59" evidence="1"/>
<dbReference type="EC" id="3.1.4.-" evidence="1"/>
<dbReference type="EMBL" id="CP000247">
    <property type="protein sequence ID" value="ABG68215.1"/>
    <property type="molecule type" value="Genomic_DNA"/>
</dbReference>
<dbReference type="RefSeq" id="WP_001094534.1">
    <property type="nucleotide sequence ID" value="NC_008253.1"/>
</dbReference>
<dbReference type="SMR" id="Q0TLG6"/>
<dbReference type="KEGG" id="ecp:ECP_0175"/>
<dbReference type="HOGENOM" id="CLU_012833_0_0_6"/>
<dbReference type="Proteomes" id="UP000009182">
    <property type="component" value="Chromosome"/>
</dbReference>
<dbReference type="GO" id="GO:0008773">
    <property type="term" value="F:[protein-PII] uridylyltransferase activity"/>
    <property type="evidence" value="ECO:0007669"/>
    <property type="project" value="UniProtKB-UniRule"/>
</dbReference>
<dbReference type="GO" id="GO:0008081">
    <property type="term" value="F:phosphoric diester hydrolase activity"/>
    <property type="evidence" value="ECO:0007669"/>
    <property type="project" value="UniProtKB-UniRule"/>
</dbReference>
<dbReference type="GO" id="GO:0006808">
    <property type="term" value="P:regulation of nitrogen utilization"/>
    <property type="evidence" value="ECO:0007669"/>
    <property type="project" value="UniProtKB-UniRule"/>
</dbReference>
<dbReference type="CDD" id="cd04899">
    <property type="entry name" value="ACT_ACR-UUR-like_2"/>
    <property type="match status" value="1"/>
</dbReference>
<dbReference type="CDD" id="cd04900">
    <property type="entry name" value="ACT_UUR-like_1"/>
    <property type="match status" value="1"/>
</dbReference>
<dbReference type="CDD" id="cd00077">
    <property type="entry name" value="HDc"/>
    <property type="match status" value="1"/>
</dbReference>
<dbReference type="CDD" id="cd05401">
    <property type="entry name" value="NT_GlnE_GlnD_like"/>
    <property type="match status" value="1"/>
</dbReference>
<dbReference type="FunFam" id="1.10.3210.10:FF:000005">
    <property type="entry name" value="Bifunctional uridylyltransferase/uridylyl-removing enzyme"/>
    <property type="match status" value="1"/>
</dbReference>
<dbReference type="Gene3D" id="1.10.3210.10">
    <property type="entry name" value="Hypothetical protein af1432"/>
    <property type="match status" value="1"/>
</dbReference>
<dbReference type="HAMAP" id="MF_00277">
    <property type="entry name" value="PII_uridylyl_transf"/>
    <property type="match status" value="1"/>
</dbReference>
<dbReference type="InterPro" id="IPR045865">
    <property type="entry name" value="ACT-like_dom_sf"/>
</dbReference>
<dbReference type="InterPro" id="IPR002912">
    <property type="entry name" value="ACT_dom"/>
</dbReference>
<dbReference type="InterPro" id="IPR003607">
    <property type="entry name" value="HD/PDEase_dom"/>
</dbReference>
<dbReference type="InterPro" id="IPR006674">
    <property type="entry name" value="HD_domain"/>
</dbReference>
<dbReference type="InterPro" id="IPR043519">
    <property type="entry name" value="NT_sf"/>
</dbReference>
<dbReference type="InterPro" id="IPR013546">
    <property type="entry name" value="PII_UdlTrfase/GS_AdlTrfase"/>
</dbReference>
<dbReference type="InterPro" id="IPR002934">
    <property type="entry name" value="Polymerase_NTP_transf_dom"/>
</dbReference>
<dbReference type="InterPro" id="IPR010043">
    <property type="entry name" value="UTase/UR"/>
</dbReference>
<dbReference type="NCBIfam" id="NF002487">
    <property type="entry name" value="PRK01759.1"/>
    <property type="match status" value="1"/>
</dbReference>
<dbReference type="NCBIfam" id="NF003448">
    <property type="entry name" value="PRK05007.1"/>
    <property type="match status" value="1"/>
</dbReference>
<dbReference type="NCBIfam" id="TIGR01693">
    <property type="entry name" value="UTase_glnD"/>
    <property type="match status" value="1"/>
</dbReference>
<dbReference type="PANTHER" id="PTHR47320">
    <property type="entry name" value="BIFUNCTIONAL URIDYLYLTRANSFERASE/URIDYLYL-REMOVING ENZYME"/>
    <property type="match status" value="1"/>
</dbReference>
<dbReference type="PANTHER" id="PTHR47320:SF1">
    <property type="entry name" value="BIFUNCTIONAL URIDYLYLTRANSFERASE_URIDYLYL-REMOVING ENZYME"/>
    <property type="match status" value="1"/>
</dbReference>
<dbReference type="Pfam" id="PF01842">
    <property type="entry name" value="ACT"/>
    <property type="match status" value="2"/>
</dbReference>
<dbReference type="Pfam" id="PF08335">
    <property type="entry name" value="GlnD_UR_UTase"/>
    <property type="match status" value="1"/>
</dbReference>
<dbReference type="Pfam" id="PF01966">
    <property type="entry name" value="HD"/>
    <property type="match status" value="1"/>
</dbReference>
<dbReference type="Pfam" id="PF01909">
    <property type="entry name" value="NTP_transf_2"/>
    <property type="match status" value="1"/>
</dbReference>
<dbReference type="PIRSF" id="PIRSF006288">
    <property type="entry name" value="PII_uridyltransf"/>
    <property type="match status" value="1"/>
</dbReference>
<dbReference type="SMART" id="SM00471">
    <property type="entry name" value="HDc"/>
    <property type="match status" value="1"/>
</dbReference>
<dbReference type="SUPFAM" id="SSF55021">
    <property type="entry name" value="ACT-like"/>
    <property type="match status" value="2"/>
</dbReference>
<dbReference type="SUPFAM" id="SSF109604">
    <property type="entry name" value="HD-domain/PDEase-like"/>
    <property type="match status" value="1"/>
</dbReference>
<dbReference type="SUPFAM" id="SSF81301">
    <property type="entry name" value="Nucleotidyltransferase"/>
    <property type="match status" value="1"/>
</dbReference>
<dbReference type="SUPFAM" id="SSF81593">
    <property type="entry name" value="Nucleotidyltransferase substrate binding subunit/domain"/>
    <property type="match status" value="1"/>
</dbReference>
<dbReference type="PROSITE" id="PS51671">
    <property type="entry name" value="ACT"/>
    <property type="match status" value="2"/>
</dbReference>
<dbReference type="PROSITE" id="PS51831">
    <property type="entry name" value="HD"/>
    <property type="match status" value="1"/>
</dbReference>
<comment type="function">
    <text evidence="1">Modifies, by uridylylation and deuridylylation, the PII regulatory proteins (GlnB and homologs), in response to the nitrogen status of the cell that GlnD senses through the glutamine level. Under low glutamine levels, catalyzes the conversion of the PII proteins and UTP to PII-UMP and PPi, while under higher glutamine levels, GlnD hydrolyzes PII-UMP to PII and UMP (deuridylylation). Thus, controls uridylylation state and activity of the PII proteins, and plays an important role in the regulation of nitrogen assimilation and metabolism.</text>
</comment>
<comment type="catalytic activity">
    <reaction evidence="1">
        <text>[protein-PII]-L-tyrosine + UTP = [protein-PII]-uridylyl-L-tyrosine + diphosphate</text>
        <dbReference type="Rhea" id="RHEA:13673"/>
        <dbReference type="Rhea" id="RHEA-COMP:12147"/>
        <dbReference type="Rhea" id="RHEA-COMP:12148"/>
        <dbReference type="ChEBI" id="CHEBI:33019"/>
        <dbReference type="ChEBI" id="CHEBI:46398"/>
        <dbReference type="ChEBI" id="CHEBI:46858"/>
        <dbReference type="ChEBI" id="CHEBI:90602"/>
        <dbReference type="EC" id="2.7.7.59"/>
    </reaction>
</comment>
<comment type="catalytic activity">
    <reaction evidence="1">
        <text>[protein-PII]-uridylyl-L-tyrosine + H2O = [protein-PII]-L-tyrosine + UMP + H(+)</text>
        <dbReference type="Rhea" id="RHEA:48600"/>
        <dbReference type="Rhea" id="RHEA-COMP:12147"/>
        <dbReference type="Rhea" id="RHEA-COMP:12148"/>
        <dbReference type="ChEBI" id="CHEBI:15377"/>
        <dbReference type="ChEBI" id="CHEBI:15378"/>
        <dbReference type="ChEBI" id="CHEBI:46858"/>
        <dbReference type="ChEBI" id="CHEBI:57865"/>
        <dbReference type="ChEBI" id="CHEBI:90602"/>
    </reaction>
</comment>
<comment type="cofactor">
    <cofactor evidence="1">
        <name>Mg(2+)</name>
        <dbReference type="ChEBI" id="CHEBI:18420"/>
    </cofactor>
</comment>
<comment type="activity regulation">
    <text evidence="1">Uridylyltransferase (UTase) activity is inhibited by glutamine, while glutamine activates uridylyl-removing (UR) activity.</text>
</comment>
<comment type="domain">
    <text evidence="1">Has four distinct domains: an N-terminal nucleotidyltransferase (NT) domain responsible for UTase activity, a central HD domain that encodes UR activity, and two C-terminal ACT domains that seem to have a role in glutamine sensing.</text>
</comment>
<comment type="similarity">
    <text evidence="1">Belongs to the GlnD family.</text>
</comment>
<reference key="1">
    <citation type="journal article" date="2006" name="Mol. Microbiol.">
        <title>Role of pathogenicity island-associated integrases in the genome plasticity of uropathogenic Escherichia coli strain 536.</title>
        <authorList>
            <person name="Hochhut B."/>
            <person name="Wilde C."/>
            <person name="Balling G."/>
            <person name="Middendorf B."/>
            <person name="Dobrindt U."/>
            <person name="Brzuszkiewicz E."/>
            <person name="Gottschalk G."/>
            <person name="Carniel E."/>
            <person name="Hacker J."/>
        </authorList>
    </citation>
    <scope>NUCLEOTIDE SEQUENCE [LARGE SCALE GENOMIC DNA]</scope>
    <source>
        <strain>536 / UPEC</strain>
    </source>
</reference>
<gene>
    <name evidence="1" type="primary">glnD</name>
    <name type="ordered locus">ECP_0175</name>
</gene>